<feature type="chain" id="PRO_0000077591" description="Regulatory protein CII">
    <location>
        <begin position="1"/>
        <end position="97"/>
    </location>
</feature>
<feature type="DNA-binding region" description="H-T-H motif" evidence="1">
    <location>
        <begin position="26"/>
        <end position="45"/>
    </location>
</feature>
<organism>
    <name type="scientific">Enterobacteria phage 434</name>
    <name type="common">Bacteriophage 434</name>
    <dbReference type="NCBI Taxonomy" id="10712"/>
    <lineage>
        <taxon>Viruses</taxon>
        <taxon>Duplodnaviria</taxon>
        <taxon>Heunggongvirae</taxon>
        <taxon>Uroviricota</taxon>
        <taxon>Caudoviricetes</taxon>
        <taxon>Lambdavirus</taxon>
        <taxon>Lambdavirus lambda</taxon>
    </lineage>
</organism>
<organismHost>
    <name type="scientific">Escherichia coli</name>
    <dbReference type="NCBI Taxonomy" id="562"/>
</organismHost>
<proteinExistence type="inferred from homology"/>
<sequence length="97" mass="11072">MVRANKRNEALRIESALLNKIAMLGTEKTAEAVGVDKSQISRWKRDWIPKFSMLLAVLEWGVVDDDMARLARQVASILTNKKRPAATERSEQIQMEF</sequence>
<comment type="function">
    <text>This protein and protein CIII form a complex that is involved in the initiation of lysogeny. The complex binds at either of the cy regulatory sites preceding the CI repressor protein and integrase coding regions and induces transcription of these genes.</text>
</comment>
<comment type="similarity">
    <text evidence="2">Belongs to the lambda phage CII protein family.</text>
</comment>
<protein>
    <recommendedName>
        <fullName>Regulatory protein CII</fullName>
    </recommendedName>
</protein>
<accession>P03043</accession>
<dbReference type="EMBL" id="V00635">
    <property type="protein sequence ID" value="CAA23909.1"/>
    <property type="molecule type" value="Genomic_DNA"/>
</dbReference>
<dbReference type="PIR" id="E03579">
    <property type="entry name" value="QCBP43"/>
</dbReference>
<dbReference type="SMR" id="P03043"/>
<dbReference type="GO" id="GO:0003677">
    <property type="term" value="F:DNA binding"/>
    <property type="evidence" value="ECO:0007669"/>
    <property type="project" value="UniProtKB-KW"/>
</dbReference>
<dbReference type="GO" id="GO:0006355">
    <property type="term" value="P:regulation of DNA-templated transcription"/>
    <property type="evidence" value="ECO:0007669"/>
    <property type="project" value="InterPro"/>
</dbReference>
<dbReference type="Gene3D" id="1.10.260.40">
    <property type="entry name" value="lambda repressor-like DNA-binding domains"/>
    <property type="match status" value="1"/>
</dbReference>
<dbReference type="InterPro" id="IPR010982">
    <property type="entry name" value="Lambda_DNA-bd_dom_sf"/>
</dbReference>
<dbReference type="InterPro" id="IPR007933">
    <property type="entry name" value="Transcrpt_activ_CII"/>
</dbReference>
<dbReference type="Pfam" id="PF05269">
    <property type="entry name" value="Phage_CII"/>
    <property type="match status" value="1"/>
</dbReference>
<dbReference type="SUPFAM" id="SSF47413">
    <property type="entry name" value="lambda repressor-like DNA-binding domains"/>
    <property type="match status" value="1"/>
</dbReference>
<name>RPC2_BP434</name>
<reference key="1">
    <citation type="journal article" date="1979" name="Nucleic Acids Res.">
        <title>Nucleotide sequence of the cro-cII-oop region of bacteriophage 434 DNA.</title>
        <authorList>
            <person name="Grosschedl R."/>
            <person name="Schwarz E."/>
        </authorList>
    </citation>
    <scope>NUCLEOTIDE SEQUENCE [GENOMIC DNA]</scope>
</reference>
<gene>
    <name type="primary">CII</name>
</gene>
<evidence type="ECO:0000255" key="1"/>
<evidence type="ECO:0000305" key="2"/>
<keyword id="KW-0010">Activator</keyword>
<keyword id="KW-0238">DNA-binding</keyword>
<keyword id="KW-0244">Early protein</keyword>
<keyword id="KW-0804">Transcription</keyword>
<keyword id="KW-0805">Transcription regulation</keyword>